<name>RNH_FRATN</name>
<gene>
    <name evidence="1" type="primary">rnhA</name>
    <name type="ordered locus">FTN_1089</name>
</gene>
<accession>A0Q6W0</accession>
<comment type="function">
    <text evidence="1">Endonuclease that specifically degrades the RNA of RNA-DNA hybrids.</text>
</comment>
<comment type="catalytic activity">
    <reaction evidence="1">
        <text>Endonucleolytic cleavage to 5'-phosphomonoester.</text>
        <dbReference type="EC" id="3.1.26.4"/>
    </reaction>
</comment>
<comment type="cofactor">
    <cofactor evidence="1">
        <name>Mg(2+)</name>
        <dbReference type="ChEBI" id="CHEBI:18420"/>
    </cofactor>
    <text evidence="1">Binds 1 Mg(2+) ion per subunit. May bind a second metal ion at a regulatory site, or after substrate binding.</text>
</comment>
<comment type="subunit">
    <text evidence="1">Monomer.</text>
</comment>
<comment type="subcellular location">
    <subcellularLocation>
        <location evidence="1">Cytoplasm</location>
    </subcellularLocation>
</comment>
<comment type="similarity">
    <text evidence="1">Belongs to the RNase H family.</text>
</comment>
<evidence type="ECO:0000255" key="1">
    <source>
        <dbReference type="HAMAP-Rule" id="MF_00042"/>
    </source>
</evidence>
<evidence type="ECO:0000255" key="2">
    <source>
        <dbReference type="PROSITE-ProRule" id="PRU00408"/>
    </source>
</evidence>
<dbReference type="EC" id="3.1.26.4" evidence="1"/>
<dbReference type="EMBL" id="CP000439">
    <property type="protein sequence ID" value="ABK89975.1"/>
    <property type="molecule type" value="Genomic_DNA"/>
</dbReference>
<dbReference type="RefSeq" id="WP_003015471.1">
    <property type="nucleotide sequence ID" value="NZ_CP009633.1"/>
</dbReference>
<dbReference type="SMR" id="A0Q6W0"/>
<dbReference type="GeneID" id="75265176"/>
<dbReference type="KEGG" id="ftn:FTN_1089"/>
<dbReference type="KEGG" id="ftx:AW25_920"/>
<dbReference type="Proteomes" id="UP000000762">
    <property type="component" value="Chromosome"/>
</dbReference>
<dbReference type="GO" id="GO:0005737">
    <property type="term" value="C:cytoplasm"/>
    <property type="evidence" value="ECO:0007669"/>
    <property type="project" value="UniProtKB-SubCell"/>
</dbReference>
<dbReference type="GO" id="GO:0000287">
    <property type="term" value="F:magnesium ion binding"/>
    <property type="evidence" value="ECO:0007669"/>
    <property type="project" value="UniProtKB-UniRule"/>
</dbReference>
<dbReference type="GO" id="GO:0003676">
    <property type="term" value="F:nucleic acid binding"/>
    <property type="evidence" value="ECO:0007669"/>
    <property type="project" value="InterPro"/>
</dbReference>
<dbReference type="GO" id="GO:0004523">
    <property type="term" value="F:RNA-DNA hybrid ribonuclease activity"/>
    <property type="evidence" value="ECO:0007669"/>
    <property type="project" value="UniProtKB-UniRule"/>
</dbReference>
<dbReference type="GO" id="GO:0043137">
    <property type="term" value="P:DNA replication, removal of RNA primer"/>
    <property type="evidence" value="ECO:0007669"/>
    <property type="project" value="TreeGrafter"/>
</dbReference>
<dbReference type="CDD" id="cd09278">
    <property type="entry name" value="RNase_HI_prokaryote_like"/>
    <property type="match status" value="1"/>
</dbReference>
<dbReference type="FunFam" id="3.30.420.10:FF:000089">
    <property type="entry name" value="Ribonuclease H"/>
    <property type="match status" value="1"/>
</dbReference>
<dbReference type="Gene3D" id="3.30.420.10">
    <property type="entry name" value="Ribonuclease H-like superfamily/Ribonuclease H"/>
    <property type="match status" value="1"/>
</dbReference>
<dbReference type="HAMAP" id="MF_00042">
    <property type="entry name" value="RNase_H"/>
    <property type="match status" value="1"/>
</dbReference>
<dbReference type="InterPro" id="IPR050092">
    <property type="entry name" value="RNase_H"/>
</dbReference>
<dbReference type="InterPro" id="IPR012337">
    <property type="entry name" value="RNaseH-like_sf"/>
</dbReference>
<dbReference type="InterPro" id="IPR002156">
    <property type="entry name" value="RNaseH_domain"/>
</dbReference>
<dbReference type="InterPro" id="IPR036397">
    <property type="entry name" value="RNaseH_sf"/>
</dbReference>
<dbReference type="InterPro" id="IPR022892">
    <property type="entry name" value="RNaseHI"/>
</dbReference>
<dbReference type="NCBIfam" id="NF001236">
    <property type="entry name" value="PRK00203.1"/>
    <property type="match status" value="1"/>
</dbReference>
<dbReference type="PANTHER" id="PTHR10642">
    <property type="entry name" value="RIBONUCLEASE H1"/>
    <property type="match status" value="1"/>
</dbReference>
<dbReference type="PANTHER" id="PTHR10642:SF26">
    <property type="entry name" value="RIBONUCLEASE H1"/>
    <property type="match status" value="1"/>
</dbReference>
<dbReference type="Pfam" id="PF00075">
    <property type="entry name" value="RNase_H"/>
    <property type="match status" value="1"/>
</dbReference>
<dbReference type="SUPFAM" id="SSF53098">
    <property type="entry name" value="Ribonuclease H-like"/>
    <property type="match status" value="1"/>
</dbReference>
<dbReference type="PROSITE" id="PS50879">
    <property type="entry name" value="RNASE_H_1"/>
    <property type="match status" value="1"/>
</dbReference>
<keyword id="KW-0963">Cytoplasm</keyword>
<keyword id="KW-0255">Endonuclease</keyword>
<keyword id="KW-0378">Hydrolase</keyword>
<keyword id="KW-0460">Magnesium</keyword>
<keyword id="KW-0479">Metal-binding</keyword>
<keyword id="KW-0540">Nuclease</keyword>
<reference key="1">
    <citation type="journal article" date="2007" name="Genome Biol.">
        <title>Comparison of Francisella tularensis genomes reveals evolutionary events associated with the emergence of human pathogenic strains.</title>
        <authorList>
            <person name="Rohmer L."/>
            <person name="Fong C."/>
            <person name="Abmayr S."/>
            <person name="Wasnick M."/>
            <person name="Larson Freeman T.J."/>
            <person name="Radey M."/>
            <person name="Guina T."/>
            <person name="Svensson K."/>
            <person name="Hayden H.S."/>
            <person name="Jacobs M."/>
            <person name="Gallagher L.A."/>
            <person name="Manoil C."/>
            <person name="Ernst R.K."/>
            <person name="Drees B."/>
            <person name="Buckley D."/>
            <person name="Haugen E."/>
            <person name="Bovee D."/>
            <person name="Zhou Y."/>
            <person name="Chang J."/>
            <person name="Levy R."/>
            <person name="Lim R."/>
            <person name="Gillett W."/>
            <person name="Guenthener D."/>
            <person name="Kang A."/>
            <person name="Shaffer S.A."/>
            <person name="Taylor G."/>
            <person name="Chen J."/>
            <person name="Gallis B."/>
            <person name="D'Argenio D.A."/>
            <person name="Forsman M."/>
            <person name="Olson M.V."/>
            <person name="Goodlett D.R."/>
            <person name="Kaul R."/>
            <person name="Miller S.I."/>
            <person name="Brittnacher M.J."/>
        </authorList>
    </citation>
    <scope>NUCLEOTIDE SEQUENCE [LARGE SCALE GENOMIC DNA]</scope>
    <source>
        <strain>U112</strain>
    </source>
</reference>
<organism>
    <name type="scientific">Francisella tularensis subsp. novicida (strain U112)</name>
    <dbReference type="NCBI Taxonomy" id="401614"/>
    <lineage>
        <taxon>Bacteria</taxon>
        <taxon>Pseudomonadati</taxon>
        <taxon>Pseudomonadota</taxon>
        <taxon>Gammaproteobacteria</taxon>
        <taxon>Thiotrichales</taxon>
        <taxon>Francisellaceae</taxon>
        <taxon>Francisella</taxon>
    </lineage>
</organism>
<protein>
    <recommendedName>
        <fullName evidence="1">Ribonuclease H</fullName>
        <shortName evidence="1">RNase H</shortName>
        <ecNumber evidence="1">3.1.26.4</ecNumber>
    </recommendedName>
</protein>
<proteinExistence type="inferred from homology"/>
<sequence>MEIFKKKNRVIAYTDGACKGNPGIGGWGAILSYNGVDKEIYGSEKDTTNNRMELMAAIKTLQALKRKCDITIYTDSKYLQNGINEWLANWKANGWKTAAKKEVKNKDLWQELDSLTNKHNVTWGWVKGHSGNAGNEKADELANKAIAELIGK</sequence>
<feature type="chain" id="PRO_0000332601" description="Ribonuclease H">
    <location>
        <begin position="1"/>
        <end position="152"/>
    </location>
</feature>
<feature type="domain" description="RNase H type-1" evidence="2">
    <location>
        <begin position="6"/>
        <end position="147"/>
    </location>
</feature>
<feature type="binding site" evidence="1">
    <location>
        <position position="15"/>
    </location>
    <ligand>
        <name>Mg(2+)</name>
        <dbReference type="ChEBI" id="CHEBI:18420"/>
        <label>1</label>
    </ligand>
</feature>
<feature type="binding site" evidence="1">
    <location>
        <position position="15"/>
    </location>
    <ligand>
        <name>Mg(2+)</name>
        <dbReference type="ChEBI" id="CHEBI:18420"/>
        <label>2</label>
    </ligand>
</feature>
<feature type="binding site" evidence="1">
    <location>
        <position position="53"/>
    </location>
    <ligand>
        <name>Mg(2+)</name>
        <dbReference type="ChEBI" id="CHEBI:18420"/>
        <label>1</label>
    </ligand>
</feature>
<feature type="binding site" evidence="1">
    <location>
        <position position="75"/>
    </location>
    <ligand>
        <name>Mg(2+)</name>
        <dbReference type="ChEBI" id="CHEBI:18420"/>
        <label>1</label>
    </ligand>
</feature>
<feature type="binding site" evidence="1">
    <location>
        <position position="139"/>
    </location>
    <ligand>
        <name>Mg(2+)</name>
        <dbReference type="ChEBI" id="CHEBI:18420"/>
        <label>2</label>
    </ligand>
</feature>